<proteinExistence type="evidence at protein level"/>
<evidence type="ECO:0000255" key="1">
    <source>
        <dbReference type="PROSITE-ProRule" id="PRU00169"/>
    </source>
</evidence>
<evidence type="ECO:0000255" key="2">
    <source>
        <dbReference type="PROSITE-ProRule" id="PRU00193"/>
    </source>
</evidence>
<evidence type="ECO:0000269" key="3">
    <source>
    </source>
</evidence>
<evidence type="ECO:0000269" key="4">
    <source>
    </source>
</evidence>
<evidence type="ECO:0000269" key="5">
    <source>
    </source>
</evidence>
<evidence type="ECO:0000303" key="6">
    <source>
    </source>
</evidence>
<evidence type="ECO:0000305" key="7">
    <source>
    </source>
</evidence>
<evidence type="ECO:0007829" key="8">
    <source>
        <dbReference type="PDB" id="7W9H"/>
    </source>
</evidence>
<reference key="1">
    <citation type="journal article" date="2000" name="Nature">
        <title>Complete genome sequence of Pseudomonas aeruginosa PAO1, an opportunistic pathogen.</title>
        <authorList>
            <person name="Stover C.K."/>
            <person name="Pham X.-Q.T."/>
            <person name="Erwin A.L."/>
            <person name="Mizoguchi S.D."/>
            <person name="Warrener P."/>
            <person name="Hickey M.J."/>
            <person name="Brinkman F.S.L."/>
            <person name="Hufnagle W.O."/>
            <person name="Kowalik D.J."/>
            <person name="Lagrou M."/>
            <person name="Garber R.L."/>
            <person name="Goltry L."/>
            <person name="Tolentino E."/>
            <person name="Westbrock-Wadman S."/>
            <person name="Yuan Y."/>
            <person name="Brody L.L."/>
            <person name="Coulter S.N."/>
            <person name="Folger K.R."/>
            <person name="Kas A."/>
            <person name="Larbig K."/>
            <person name="Lim R.M."/>
            <person name="Smith K.A."/>
            <person name="Spencer D.H."/>
            <person name="Wong G.K.-S."/>
            <person name="Wu Z."/>
            <person name="Paulsen I.T."/>
            <person name="Reizer J."/>
            <person name="Saier M.H. Jr."/>
            <person name="Hancock R.E.W."/>
            <person name="Lory S."/>
            <person name="Olson M.V."/>
        </authorList>
    </citation>
    <scope>NUCLEOTIDE SEQUENCE [LARGE SCALE GENOMIC DNA]</scope>
    <source>
        <strain>ATCC 15692 / DSM 22644 / CIP 104116 / JCM 14847 / LMG 12228 / 1C / PRS 101 / PAO1</strain>
    </source>
</reference>
<reference key="2">
    <citation type="journal article" date="1995" name="Infect. Immun.">
        <title>Cloning and phenotypic characterization of fleS and fleR, new response regulators of Pseudomonas aeruginosa which regulate motility and adhesion to mucin.</title>
        <authorList>
            <person name="Ritchings B.W."/>
            <person name="Almira E.C."/>
            <person name="Lory S."/>
            <person name="Ramphal R."/>
        </authorList>
    </citation>
    <scope>FUNCTION</scope>
    <scope>DISRUPTION PHENOTYPE</scope>
    <source>
        <strain>PAK</strain>
    </source>
</reference>
<reference key="3">
    <citation type="journal article" date="1996" name="Am. J. Respir. Crit. Care Med.">
        <title>Recognition of mucin by the adhesin-flagellar system of Pseudomonas aeruginosa.</title>
        <authorList>
            <person name="Ramphal R."/>
            <person name="Arora S.K."/>
            <person name="Ritchings B.W."/>
        </authorList>
    </citation>
    <scope>FUNCTION</scope>
    <scope>DISRUPTION PHENOTYPE</scope>
</reference>
<reference key="4">
    <citation type="journal article" date="2019" name="IScience">
        <title>Context-Specific Requirement of Forty-Four Two-Component Loci in Pseudomonas aeruginosa Swarming.</title>
        <authorList>
            <person name="Kollaran A.M."/>
            <person name="Joge S."/>
            <person name="Kotian H.S."/>
            <person name="Badal D."/>
            <person name="Prakash D."/>
            <person name="Mishra A."/>
            <person name="Varma M."/>
            <person name="Singh V."/>
        </authorList>
    </citation>
    <scope>FUNCTION</scope>
    <scope>DISRUPTION PHENOTYPE</scope>
</reference>
<comment type="function">
    <text evidence="3 4 5 7">Member of the two-component regulatory system FleS/FleR that regulates the expression of multiple genes involved in flagellar synthesis, adhesion, swarming, motility and antibiotic resistance (PubMed:30877999, PubMed:7591148, PubMed:8876537). May function as a transcriptional activator by direct binding to a cis-acting sequence upstream of the target genes (Probable).</text>
</comment>
<comment type="disruption phenotype">
    <text evidence="3 4 5">Deletion leads to loss of motility due to the absence of flagella as well as swimming defect (PubMed:30877999, PubMed:7591148). In addition, mutant possessing pili adheres poorly to mucins (PubMed:8876537).</text>
</comment>
<organism>
    <name type="scientific">Pseudomonas aeruginosa (strain ATCC 15692 / DSM 22644 / CIP 104116 / JCM 14847 / LMG 12228 / 1C / PRS 101 / PAO1)</name>
    <dbReference type="NCBI Taxonomy" id="208964"/>
    <lineage>
        <taxon>Bacteria</taxon>
        <taxon>Pseudomonadati</taxon>
        <taxon>Pseudomonadota</taxon>
        <taxon>Gammaproteobacteria</taxon>
        <taxon>Pseudomonadales</taxon>
        <taxon>Pseudomonadaceae</taxon>
        <taxon>Pseudomonas</taxon>
    </lineage>
</organism>
<gene>
    <name evidence="6" type="primary">fleR</name>
    <name type="ordered locus">PA1099</name>
</gene>
<keyword id="KW-0002">3D-structure</keyword>
<keyword id="KW-0067">ATP-binding</keyword>
<keyword id="KW-0238">DNA-binding</keyword>
<keyword id="KW-0547">Nucleotide-binding</keyword>
<keyword id="KW-0597">Phosphoprotein</keyword>
<keyword id="KW-1185">Reference proteome</keyword>
<keyword id="KW-0804">Transcription</keyword>
<keyword id="KW-0805">Transcription regulation</keyword>
<keyword id="KW-0902">Two-component regulatory system</keyword>
<accession>Q9I4N3</accession>
<feature type="chain" id="PRO_0000448538" description="Response regulator protein FleR">
    <location>
        <begin position="1"/>
        <end position="473"/>
    </location>
</feature>
<feature type="domain" description="Response regulatory" evidence="1">
    <location>
        <begin position="4"/>
        <end position="118"/>
    </location>
</feature>
<feature type="domain" description="Sigma-54 factor interaction" evidence="2">
    <location>
        <begin position="130"/>
        <end position="359"/>
    </location>
</feature>
<feature type="binding site" evidence="2">
    <location>
        <begin position="158"/>
        <end position="165"/>
    </location>
    <ligand>
        <name>ATP</name>
        <dbReference type="ChEBI" id="CHEBI:30616"/>
    </ligand>
</feature>
<feature type="binding site" evidence="2">
    <location>
        <begin position="221"/>
        <end position="230"/>
    </location>
    <ligand>
        <name>ATP</name>
        <dbReference type="ChEBI" id="CHEBI:30616"/>
    </ligand>
</feature>
<feature type="modified residue" description="4-aspartylphosphate" evidence="1">
    <location>
        <position position="53"/>
    </location>
</feature>
<feature type="strand" evidence="8">
    <location>
        <begin position="4"/>
        <end position="8"/>
    </location>
</feature>
<feature type="helix" evidence="8">
    <location>
        <begin position="12"/>
        <end position="24"/>
    </location>
</feature>
<feature type="strand" evidence="8">
    <location>
        <begin position="28"/>
        <end position="34"/>
    </location>
</feature>
<feature type="helix" evidence="8">
    <location>
        <begin position="35"/>
        <end position="44"/>
    </location>
</feature>
<feature type="strand" evidence="8">
    <location>
        <begin position="48"/>
        <end position="55"/>
    </location>
</feature>
<feature type="strand" evidence="8">
    <location>
        <begin position="57"/>
        <end position="59"/>
    </location>
</feature>
<feature type="helix" evidence="8">
    <location>
        <begin position="61"/>
        <end position="71"/>
    </location>
</feature>
<feature type="strand" evidence="8">
    <location>
        <begin position="77"/>
        <end position="83"/>
    </location>
</feature>
<feature type="helix" evidence="8">
    <location>
        <begin position="86"/>
        <end position="94"/>
    </location>
</feature>
<feature type="strand" evidence="8">
    <location>
        <begin position="98"/>
        <end position="103"/>
    </location>
</feature>
<feature type="helix" evidence="8">
    <location>
        <begin position="107"/>
        <end position="117"/>
    </location>
</feature>
<sequence length="473" mass="51234">MAAKVLLVEDDRALREALSDTLLLGGHEFVAVDSAEAALPVLAREAFSLVISDVNMPGMDGHQLLGLIRTRYPHLPVLLMTAYGAVDRAVEAMRQGAADYLVKPFEARALLDLVARHALGQLPGSEEDGPVALEPASRQLLELAARVARSDSTVLISGESGTGKEVLANYIHQQSPRAGKPFIAINCAAIPDNMLEATLFGHEKGSFTGAIAAQPGKFELADGGTILLDEISEMPLGLQAKLLRVLQEREVERVGARKPINLDIRVLATTNRDLAAEVAAGRFREDLYYRLSVFPLAWRPLRERPADILPLAERLLRKHSRKMNLGAVALGPEAAQCLVRHAWPGNVRELDNAIQRALILQQGGLIQPADLCLTAPIGMPLAAPVPVPMPAMPPATPPSVEIPSPAAGQDASGALGDDLRRREFQVIIDTLRTERGRRKEAAERLGISPRTLRYKLAQMRDAGMDVEAYLYAI</sequence>
<dbReference type="EMBL" id="AE004091">
    <property type="protein sequence ID" value="AAG04488.1"/>
    <property type="molecule type" value="Genomic_DNA"/>
</dbReference>
<dbReference type="PIR" id="D83508">
    <property type="entry name" value="D83508"/>
</dbReference>
<dbReference type="RefSeq" id="NP_249790.1">
    <property type="nucleotide sequence ID" value="NC_002516.2"/>
</dbReference>
<dbReference type="RefSeq" id="WP_003082202.1">
    <property type="nucleotide sequence ID" value="NZ_QZGE01000006.1"/>
</dbReference>
<dbReference type="PDB" id="7W9H">
    <property type="method" value="X-ray"/>
    <property type="resolution" value="2.28 A"/>
    <property type="chains" value="A/B=1-130"/>
</dbReference>
<dbReference type="PDBsum" id="7W9H"/>
<dbReference type="SMR" id="Q9I4N3"/>
<dbReference type="STRING" id="208964.PA1099"/>
<dbReference type="PaxDb" id="208964-PA1099"/>
<dbReference type="GeneID" id="882087"/>
<dbReference type="KEGG" id="pae:PA1099"/>
<dbReference type="PATRIC" id="fig|208964.12.peg.1138"/>
<dbReference type="PseudoCAP" id="PA1099"/>
<dbReference type="HOGENOM" id="CLU_000445_0_0_6"/>
<dbReference type="InParanoid" id="Q9I4N3"/>
<dbReference type="OrthoDB" id="9804019at2"/>
<dbReference type="PhylomeDB" id="Q9I4N3"/>
<dbReference type="BioCyc" id="PAER208964:G1FZ6-1122-MONOMER"/>
<dbReference type="Proteomes" id="UP000002438">
    <property type="component" value="Chromosome"/>
</dbReference>
<dbReference type="GO" id="GO:0032993">
    <property type="term" value="C:protein-DNA complex"/>
    <property type="evidence" value="ECO:0000318"/>
    <property type="project" value="GO_Central"/>
</dbReference>
<dbReference type="GO" id="GO:0005524">
    <property type="term" value="F:ATP binding"/>
    <property type="evidence" value="ECO:0007669"/>
    <property type="project" value="UniProtKB-KW"/>
</dbReference>
<dbReference type="GO" id="GO:0016887">
    <property type="term" value="F:ATP hydrolysis activity"/>
    <property type="evidence" value="ECO:0007669"/>
    <property type="project" value="InterPro"/>
</dbReference>
<dbReference type="GO" id="GO:0000987">
    <property type="term" value="F:cis-regulatory region sequence-specific DNA binding"/>
    <property type="evidence" value="ECO:0000318"/>
    <property type="project" value="GO_Central"/>
</dbReference>
<dbReference type="GO" id="GO:0001216">
    <property type="term" value="F:DNA-binding transcription activator activity"/>
    <property type="evidence" value="ECO:0000318"/>
    <property type="project" value="GO_Central"/>
</dbReference>
<dbReference type="GO" id="GO:1900191">
    <property type="term" value="P:negative regulation of single-species biofilm formation"/>
    <property type="evidence" value="ECO:0000315"/>
    <property type="project" value="PseudoCAP"/>
</dbReference>
<dbReference type="GO" id="GO:0000160">
    <property type="term" value="P:phosphorelay signal transduction system"/>
    <property type="evidence" value="ECO:0007669"/>
    <property type="project" value="UniProtKB-KW"/>
</dbReference>
<dbReference type="GO" id="GO:0045785">
    <property type="term" value="P:positive regulation of cell adhesion"/>
    <property type="evidence" value="ECO:0000315"/>
    <property type="project" value="PseudoCAP"/>
</dbReference>
<dbReference type="GO" id="GO:2000155">
    <property type="term" value="P:positive regulation of cilium-dependent cell motility"/>
    <property type="evidence" value="ECO:0000315"/>
    <property type="project" value="PseudoCAP"/>
</dbReference>
<dbReference type="GO" id="GO:0045893">
    <property type="term" value="P:positive regulation of DNA-templated transcription"/>
    <property type="evidence" value="ECO:0000318"/>
    <property type="project" value="GO_Central"/>
</dbReference>
<dbReference type="CDD" id="cd00009">
    <property type="entry name" value="AAA"/>
    <property type="match status" value="1"/>
</dbReference>
<dbReference type="FunFam" id="3.40.50.2300:FF:000018">
    <property type="entry name" value="DNA-binding transcriptional regulator NtrC"/>
    <property type="match status" value="1"/>
</dbReference>
<dbReference type="FunFam" id="3.40.50.300:FF:000006">
    <property type="entry name" value="DNA-binding transcriptional regulator NtrC"/>
    <property type="match status" value="1"/>
</dbReference>
<dbReference type="FunFam" id="1.10.10.60:FF:000461">
    <property type="entry name" value="Sigma-54-dependent Fis family transcriptional regulator"/>
    <property type="match status" value="1"/>
</dbReference>
<dbReference type="Gene3D" id="1.10.8.60">
    <property type="match status" value="1"/>
</dbReference>
<dbReference type="Gene3D" id="3.40.50.2300">
    <property type="match status" value="1"/>
</dbReference>
<dbReference type="Gene3D" id="1.10.10.60">
    <property type="entry name" value="Homeodomain-like"/>
    <property type="match status" value="1"/>
</dbReference>
<dbReference type="Gene3D" id="3.40.50.300">
    <property type="entry name" value="P-loop containing nucleotide triphosphate hydrolases"/>
    <property type="match status" value="1"/>
</dbReference>
<dbReference type="InterPro" id="IPR003593">
    <property type="entry name" value="AAA+_ATPase"/>
</dbReference>
<dbReference type="InterPro" id="IPR011006">
    <property type="entry name" value="CheY-like_superfamily"/>
</dbReference>
<dbReference type="InterPro" id="IPR009057">
    <property type="entry name" value="Homeodomain-like_sf"/>
</dbReference>
<dbReference type="InterPro" id="IPR002197">
    <property type="entry name" value="HTH_Fis"/>
</dbReference>
<dbReference type="InterPro" id="IPR027417">
    <property type="entry name" value="P-loop_NTPase"/>
</dbReference>
<dbReference type="InterPro" id="IPR001789">
    <property type="entry name" value="Sig_transdc_resp-reg_receiver"/>
</dbReference>
<dbReference type="InterPro" id="IPR002078">
    <property type="entry name" value="Sigma_54_int"/>
</dbReference>
<dbReference type="InterPro" id="IPR025662">
    <property type="entry name" value="Sigma_54_int_dom_ATP-bd_1"/>
</dbReference>
<dbReference type="InterPro" id="IPR025943">
    <property type="entry name" value="Sigma_54_int_dom_ATP-bd_2"/>
</dbReference>
<dbReference type="InterPro" id="IPR025944">
    <property type="entry name" value="Sigma_54_int_dom_CS"/>
</dbReference>
<dbReference type="PANTHER" id="PTHR32071">
    <property type="entry name" value="TRANSCRIPTIONAL REGULATORY PROTEIN"/>
    <property type="match status" value="1"/>
</dbReference>
<dbReference type="PANTHER" id="PTHR32071:SF21">
    <property type="entry name" value="TRANSCRIPTIONAL REGULATORY PROTEIN FLGR"/>
    <property type="match status" value="1"/>
</dbReference>
<dbReference type="Pfam" id="PF02954">
    <property type="entry name" value="HTH_8"/>
    <property type="match status" value="1"/>
</dbReference>
<dbReference type="Pfam" id="PF00072">
    <property type="entry name" value="Response_reg"/>
    <property type="match status" value="1"/>
</dbReference>
<dbReference type="Pfam" id="PF00158">
    <property type="entry name" value="Sigma54_activat"/>
    <property type="match status" value="1"/>
</dbReference>
<dbReference type="PRINTS" id="PR01590">
    <property type="entry name" value="HTHFIS"/>
</dbReference>
<dbReference type="SMART" id="SM00382">
    <property type="entry name" value="AAA"/>
    <property type="match status" value="1"/>
</dbReference>
<dbReference type="SMART" id="SM00448">
    <property type="entry name" value="REC"/>
    <property type="match status" value="1"/>
</dbReference>
<dbReference type="SUPFAM" id="SSF52172">
    <property type="entry name" value="CheY-like"/>
    <property type="match status" value="1"/>
</dbReference>
<dbReference type="SUPFAM" id="SSF46689">
    <property type="entry name" value="Homeodomain-like"/>
    <property type="match status" value="1"/>
</dbReference>
<dbReference type="SUPFAM" id="SSF52540">
    <property type="entry name" value="P-loop containing nucleoside triphosphate hydrolases"/>
    <property type="match status" value="1"/>
</dbReference>
<dbReference type="PROSITE" id="PS50110">
    <property type="entry name" value="RESPONSE_REGULATORY"/>
    <property type="match status" value="1"/>
</dbReference>
<dbReference type="PROSITE" id="PS00675">
    <property type="entry name" value="SIGMA54_INTERACT_1"/>
    <property type="match status" value="1"/>
</dbReference>
<dbReference type="PROSITE" id="PS00676">
    <property type="entry name" value="SIGMA54_INTERACT_2"/>
    <property type="match status" value="1"/>
</dbReference>
<dbReference type="PROSITE" id="PS00688">
    <property type="entry name" value="SIGMA54_INTERACT_3"/>
    <property type="match status" value="1"/>
</dbReference>
<dbReference type="PROSITE" id="PS50045">
    <property type="entry name" value="SIGMA54_INTERACT_4"/>
    <property type="match status" value="1"/>
</dbReference>
<protein>
    <recommendedName>
        <fullName evidence="6">Response regulator protein FleR</fullName>
    </recommendedName>
</protein>
<name>FLER_PSEAE</name>